<proteinExistence type="inferred from homology"/>
<feature type="chain" id="PRO_0000313289" description="DNA ligase">
    <location>
        <begin position="1"/>
        <end position="747"/>
    </location>
</feature>
<feature type="domain" description="BRCT" evidence="1">
    <location>
        <begin position="659"/>
        <end position="747"/>
    </location>
</feature>
<feature type="active site" description="N6-AMP-lysine intermediate" evidence="1">
    <location>
        <position position="115"/>
    </location>
</feature>
<feature type="binding site" evidence="1">
    <location>
        <begin position="33"/>
        <end position="37"/>
    </location>
    <ligand>
        <name>NAD(+)</name>
        <dbReference type="ChEBI" id="CHEBI:57540"/>
    </ligand>
</feature>
<feature type="binding site" evidence="1">
    <location>
        <begin position="83"/>
        <end position="84"/>
    </location>
    <ligand>
        <name>NAD(+)</name>
        <dbReference type="ChEBI" id="CHEBI:57540"/>
    </ligand>
</feature>
<feature type="binding site" evidence="1">
    <location>
        <position position="113"/>
    </location>
    <ligand>
        <name>NAD(+)</name>
        <dbReference type="ChEBI" id="CHEBI:57540"/>
    </ligand>
</feature>
<feature type="binding site" evidence="1">
    <location>
        <position position="136"/>
    </location>
    <ligand>
        <name>NAD(+)</name>
        <dbReference type="ChEBI" id="CHEBI:57540"/>
    </ligand>
</feature>
<feature type="binding site" evidence="1">
    <location>
        <position position="174"/>
    </location>
    <ligand>
        <name>NAD(+)</name>
        <dbReference type="ChEBI" id="CHEBI:57540"/>
    </ligand>
</feature>
<feature type="binding site" evidence="1">
    <location>
        <position position="299"/>
    </location>
    <ligand>
        <name>NAD(+)</name>
        <dbReference type="ChEBI" id="CHEBI:57540"/>
    </ligand>
</feature>
<feature type="binding site" evidence="1">
    <location>
        <position position="323"/>
    </location>
    <ligand>
        <name>NAD(+)</name>
        <dbReference type="ChEBI" id="CHEBI:57540"/>
    </ligand>
</feature>
<feature type="binding site" evidence="1">
    <location>
        <position position="417"/>
    </location>
    <ligand>
        <name>Zn(2+)</name>
        <dbReference type="ChEBI" id="CHEBI:29105"/>
    </ligand>
</feature>
<feature type="binding site" evidence="1">
    <location>
        <position position="420"/>
    </location>
    <ligand>
        <name>Zn(2+)</name>
        <dbReference type="ChEBI" id="CHEBI:29105"/>
    </ligand>
</feature>
<feature type="binding site" evidence="1">
    <location>
        <position position="436"/>
    </location>
    <ligand>
        <name>Zn(2+)</name>
        <dbReference type="ChEBI" id="CHEBI:29105"/>
    </ligand>
</feature>
<feature type="binding site" evidence="1">
    <location>
        <position position="442"/>
    </location>
    <ligand>
        <name>Zn(2+)</name>
        <dbReference type="ChEBI" id="CHEBI:29105"/>
    </ligand>
</feature>
<sequence>MAADARAEAQGLTTRILELRDAYYELDTVLVSDEEYDRMLRRLEELERLHPELQSQDSPTQTVGGRAQTTLFAPVEHAERMLSLDNVFSFEAFEAWAAKIERDAGRRVDYLCELKIDGLAINLRYENGVLVTAATRGDGVVGEDVTENIRHIPAITQRLSGAGPFPPVVEVRGEVFFPVAKFEELNANQQAAGERVFANARNAASGSLRQKAEGKNPAQRRLMRDRLGRLRMLVHGIGAWPNPPVATQSGVYELLRSWGLPTSAHGRVFGTVQEAADFIGRSAERRDTVEHEIDGVVIKVDELVLHDELGATSRAPRWAIAYKYPPEQVNTKLLDIVVSVGRTGRATPFAVMEKVKVAGSEVRQATLHNQDVVKAKGVLIGDTVVLRKAGDVIPEVLGPVVELRDGTEREFAMPTDCPECGTPLAPAKEGDIDLRCPNAEFCPAQVRGRVEHIGSRGGLDIEALGEVAAAALTQPRFPERAPLPTEAGLFGLRLEDLFPIEVVVRDSETGLPKLTETGVEKVDAPFRRRRQKKDGAFDPEAEAFDGDEIAVPSKSAIELLANLRAARTKPLWRILVSLNIRHVGPVAARALADHFGSLDAIRAASRDELAAVDGVGGIVADAVLSWFEIGWHCEIVENWARDGVQFAIPGHPGPGRADTGGGVLSGLTVVATGSLEGYTREAAQEAIVAAGGKAASSVSKKTDFVAAGPGAGSKLAKAEELGVRVLDAAQFTILVEQGPGALPEVAE</sequence>
<gene>
    <name evidence="1" type="primary">ligA</name>
    <name type="ordered locus">Lxx14380</name>
</gene>
<keyword id="KW-0227">DNA damage</keyword>
<keyword id="KW-0234">DNA repair</keyword>
<keyword id="KW-0235">DNA replication</keyword>
<keyword id="KW-0436">Ligase</keyword>
<keyword id="KW-0460">Magnesium</keyword>
<keyword id="KW-0464">Manganese</keyword>
<keyword id="KW-0479">Metal-binding</keyword>
<keyword id="KW-0520">NAD</keyword>
<keyword id="KW-1185">Reference proteome</keyword>
<keyword id="KW-0862">Zinc</keyword>
<dbReference type="EC" id="6.5.1.2" evidence="1"/>
<dbReference type="EMBL" id="AE016822">
    <property type="protein sequence ID" value="AAT89251.1"/>
    <property type="molecule type" value="Genomic_DNA"/>
</dbReference>
<dbReference type="SMR" id="Q6AEE5"/>
<dbReference type="STRING" id="281090.Lxx14380"/>
<dbReference type="KEGG" id="lxx:Lxx14380"/>
<dbReference type="eggNOG" id="COG0272">
    <property type="taxonomic scope" value="Bacteria"/>
</dbReference>
<dbReference type="HOGENOM" id="CLU_007764_2_1_11"/>
<dbReference type="Proteomes" id="UP000001306">
    <property type="component" value="Chromosome"/>
</dbReference>
<dbReference type="GO" id="GO:0005829">
    <property type="term" value="C:cytosol"/>
    <property type="evidence" value="ECO:0007669"/>
    <property type="project" value="TreeGrafter"/>
</dbReference>
<dbReference type="GO" id="GO:0003911">
    <property type="term" value="F:DNA ligase (NAD+) activity"/>
    <property type="evidence" value="ECO:0007669"/>
    <property type="project" value="UniProtKB-UniRule"/>
</dbReference>
<dbReference type="GO" id="GO:0046872">
    <property type="term" value="F:metal ion binding"/>
    <property type="evidence" value="ECO:0007669"/>
    <property type="project" value="UniProtKB-KW"/>
</dbReference>
<dbReference type="GO" id="GO:0006281">
    <property type="term" value="P:DNA repair"/>
    <property type="evidence" value="ECO:0007669"/>
    <property type="project" value="UniProtKB-KW"/>
</dbReference>
<dbReference type="GO" id="GO:0006260">
    <property type="term" value="P:DNA replication"/>
    <property type="evidence" value="ECO:0007669"/>
    <property type="project" value="UniProtKB-KW"/>
</dbReference>
<dbReference type="CDD" id="cd17748">
    <property type="entry name" value="BRCT_DNA_ligase_like"/>
    <property type="match status" value="1"/>
</dbReference>
<dbReference type="CDD" id="cd00114">
    <property type="entry name" value="LIGANc"/>
    <property type="match status" value="1"/>
</dbReference>
<dbReference type="FunFam" id="2.40.50.140:FF:000012">
    <property type="entry name" value="DNA ligase"/>
    <property type="match status" value="1"/>
</dbReference>
<dbReference type="Gene3D" id="6.20.10.30">
    <property type="match status" value="1"/>
</dbReference>
<dbReference type="Gene3D" id="1.10.150.20">
    <property type="entry name" value="5' to 3' exonuclease, C-terminal subdomain"/>
    <property type="match status" value="2"/>
</dbReference>
<dbReference type="Gene3D" id="3.40.50.10190">
    <property type="entry name" value="BRCT domain"/>
    <property type="match status" value="1"/>
</dbReference>
<dbReference type="Gene3D" id="3.30.470.30">
    <property type="entry name" value="DNA ligase/mRNA capping enzyme"/>
    <property type="match status" value="1"/>
</dbReference>
<dbReference type="Gene3D" id="1.10.287.610">
    <property type="entry name" value="Helix hairpin bin"/>
    <property type="match status" value="1"/>
</dbReference>
<dbReference type="Gene3D" id="2.40.50.140">
    <property type="entry name" value="Nucleic acid-binding proteins"/>
    <property type="match status" value="1"/>
</dbReference>
<dbReference type="HAMAP" id="MF_01588">
    <property type="entry name" value="DNA_ligase_A"/>
    <property type="match status" value="1"/>
</dbReference>
<dbReference type="InterPro" id="IPR001357">
    <property type="entry name" value="BRCT_dom"/>
</dbReference>
<dbReference type="InterPro" id="IPR036420">
    <property type="entry name" value="BRCT_dom_sf"/>
</dbReference>
<dbReference type="InterPro" id="IPR041663">
    <property type="entry name" value="DisA/LigA_HHH"/>
</dbReference>
<dbReference type="InterPro" id="IPR001679">
    <property type="entry name" value="DNA_ligase"/>
</dbReference>
<dbReference type="InterPro" id="IPR018239">
    <property type="entry name" value="DNA_ligase_AS"/>
</dbReference>
<dbReference type="InterPro" id="IPR013839">
    <property type="entry name" value="DNAligase_adenylation"/>
</dbReference>
<dbReference type="InterPro" id="IPR013840">
    <property type="entry name" value="DNAligase_N"/>
</dbReference>
<dbReference type="InterPro" id="IPR012340">
    <property type="entry name" value="NA-bd_OB-fold"/>
</dbReference>
<dbReference type="InterPro" id="IPR004150">
    <property type="entry name" value="NAD_DNA_ligase_OB"/>
</dbReference>
<dbReference type="InterPro" id="IPR010994">
    <property type="entry name" value="RuvA_2-like"/>
</dbReference>
<dbReference type="InterPro" id="IPR004149">
    <property type="entry name" value="Znf_DNAligase_C4"/>
</dbReference>
<dbReference type="NCBIfam" id="TIGR00575">
    <property type="entry name" value="dnlj"/>
    <property type="match status" value="1"/>
</dbReference>
<dbReference type="NCBIfam" id="NF005932">
    <property type="entry name" value="PRK07956.1"/>
    <property type="match status" value="1"/>
</dbReference>
<dbReference type="PANTHER" id="PTHR23389">
    <property type="entry name" value="CHROMOSOME TRANSMISSION FIDELITY FACTOR 18"/>
    <property type="match status" value="1"/>
</dbReference>
<dbReference type="PANTHER" id="PTHR23389:SF9">
    <property type="entry name" value="DNA LIGASE"/>
    <property type="match status" value="1"/>
</dbReference>
<dbReference type="Pfam" id="PF00533">
    <property type="entry name" value="BRCT"/>
    <property type="match status" value="1"/>
</dbReference>
<dbReference type="Pfam" id="PF01653">
    <property type="entry name" value="DNA_ligase_aden"/>
    <property type="match status" value="1"/>
</dbReference>
<dbReference type="Pfam" id="PF03120">
    <property type="entry name" value="DNA_ligase_OB"/>
    <property type="match status" value="1"/>
</dbReference>
<dbReference type="Pfam" id="PF03119">
    <property type="entry name" value="DNA_ligase_ZBD"/>
    <property type="match status" value="1"/>
</dbReference>
<dbReference type="Pfam" id="PF12826">
    <property type="entry name" value="HHH_2"/>
    <property type="match status" value="1"/>
</dbReference>
<dbReference type="PIRSF" id="PIRSF001604">
    <property type="entry name" value="LigA"/>
    <property type="match status" value="1"/>
</dbReference>
<dbReference type="SMART" id="SM00292">
    <property type="entry name" value="BRCT"/>
    <property type="match status" value="1"/>
</dbReference>
<dbReference type="SMART" id="SM00532">
    <property type="entry name" value="LIGANc"/>
    <property type="match status" value="1"/>
</dbReference>
<dbReference type="SUPFAM" id="SSF52113">
    <property type="entry name" value="BRCT domain"/>
    <property type="match status" value="1"/>
</dbReference>
<dbReference type="SUPFAM" id="SSF56091">
    <property type="entry name" value="DNA ligase/mRNA capping enzyme, catalytic domain"/>
    <property type="match status" value="1"/>
</dbReference>
<dbReference type="SUPFAM" id="SSF50249">
    <property type="entry name" value="Nucleic acid-binding proteins"/>
    <property type="match status" value="1"/>
</dbReference>
<dbReference type="SUPFAM" id="SSF47781">
    <property type="entry name" value="RuvA domain 2-like"/>
    <property type="match status" value="1"/>
</dbReference>
<dbReference type="PROSITE" id="PS50172">
    <property type="entry name" value="BRCT"/>
    <property type="match status" value="1"/>
</dbReference>
<dbReference type="PROSITE" id="PS01055">
    <property type="entry name" value="DNA_LIGASE_N1"/>
    <property type="match status" value="1"/>
</dbReference>
<protein>
    <recommendedName>
        <fullName evidence="1">DNA ligase</fullName>
        <ecNumber evidence="1">6.5.1.2</ecNumber>
    </recommendedName>
    <alternativeName>
        <fullName evidence="1">Polydeoxyribonucleotide synthase [NAD(+)]</fullName>
    </alternativeName>
</protein>
<name>DNLJ_LEIXX</name>
<accession>Q6AEE5</accession>
<organism>
    <name type="scientific">Leifsonia xyli subsp. xyli (strain CTCB07)</name>
    <dbReference type="NCBI Taxonomy" id="281090"/>
    <lineage>
        <taxon>Bacteria</taxon>
        <taxon>Bacillati</taxon>
        <taxon>Actinomycetota</taxon>
        <taxon>Actinomycetes</taxon>
        <taxon>Micrococcales</taxon>
        <taxon>Microbacteriaceae</taxon>
        <taxon>Leifsonia</taxon>
    </lineage>
</organism>
<comment type="function">
    <text evidence="1">DNA ligase that catalyzes the formation of phosphodiester linkages between 5'-phosphoryl and 3'-hydroxyl groups in double-stranded DNA using NAD as a coenzyme and as the energy source for the reaction. It is essential for DNA replication and repair of damaged DNA.</text>
</comment>
<comment type="catalytic activity">
    <reaction evidence="1">
        <text>NAD(+) + (deoxyribonucleotide)n-3'-hydroxyl + 5'-phospho-(deoxyribonucleotide)m = (deoxyribonucleotide)n+m + AMP + beta-nicotinamide D-nucleotide.</text>
        <dbReference type="EC" id="6.5.1.2"/>
    </reaction>
</comment>
<comment type="cofactor">
    <cofactor evidence="1">
        <name>Mg(2+)</name>
        <dbReference type="ChEBI" id="CHEBI:18420"/>
    </cofactor>
    <cofactor evidence="1">
        <name>Mn(2+)</name>
        <dbReference type="ChEBI" id="CHEBI:29035"/>
    </cofactor>
</comment>
<comment type="similarity">
    <text evidence="1">Belongs to the NAD-dependent DNA ligase family. LigA subfamily.</text>
</comment>
<evidence type="ECO:0000255" key="1">
    <source>
        <dbReference type="HAMAP-Rule" id="MF_01588"/>
    </source>
</evidence>
<reference key="1">
    <citation type="journal article" date="2004" name="Mol. Plant Microbe Interact.">
        <title>The genome sequence of the Gram-positive sugarcane pathogen Leifsonia xyli subsp. xyli.</title>
        <authorList>
            <person name="Monteiro-Vitorello C.B."/>
            <person name="Camargo L.E.A."/>
            <person name="Van Sluys M.A."/>
            <person name="Kitajima J.P."/>
            <person name="Truffi D."/>
            <person name="do Amaral A.M."/>
            <person name="Harakava R."/>
            <person name="de Oliveira J.C.F."/>
            <person name="Wood D."/>
            <person name="de Oliveira M.C."/>
            <person name="Miyaki C.Y."/>
            <person name="Takita M.A."/>
            <person name="da Silva A.C.R."/>
            <person name="Furlan L.R."/>
            <person name="Carraro D.M."/>
            <person name="Camarotte G."/>
            <person name="Almeida N.F. Jr."/>
            <person name="Carrer H."/>
            <person name="Coutinho L.L."/>
            <person name="El-Dorry H.A."/>
            <person name="Ferro M.I.T."/>
            <person name="Gagliardi P.R."/>
            <person name="Giglioti E."/>
            <person name="Goldman M.H.S."/>
            <person name="Goldman G.H."/>
            <person name="Kimura E.T."/>
            <person name="Ferro E.S."/>
            <person name="Kuramae E.E."/>
            <person name="Lemos E.G.M."/>
            <person name="Lemos M.V.F."/>
            <person name="Mauro S.M.Z."/>
            <person name="Machado M.A."/>
            <person name="Marino C.L."/>
            <person name="Menck C.F."/>
            <person name="Nunes L.R."/>
            <person name="Oliveira R.C."/>
            <person name="Pereira G.G."/>
            <person name="Siqueira W."/>
            <person name="de Souza A.A."/>
            <person name="Tsai S.M."/>
            <person name="Zanca A.S."/>
            <person name="Simpson A.J.G."/>
            <person name="Brumbley S.M."/>
            <person name="Setubal J.C."/>
        </authorList>
    </citation>
    <scope>NUCLEOTIDE SEQUENCE [LARGE SCALE GENOMIC DNA]</scope>
    <source>
        <strain>CTCB07</strain>
    </source>
</reference>